<protein>
    <recommendedName>
        <fullName>Uncharacterized protein AF_1237</fullName>
    </recommendedName>
</protein>
<evidence type="ECO:0000255" key="1"/>
<evidence type="ECO:0000256" key="2">
    <source>
        <dbReference type="SAM" id="MobiDB-lite"/>
    </source>
</evidence>
<evidence type="ECO:0000305" key="3"/>
<proteinExistence type="inferred from homology"/>
<name>Y1237_ARCFU</name>
<gene>
    <name type="ordered locus">AF_1237</name>
</gene>
<dbReference type="EMBL" id="AE000782">
    <property type="protein sequence ID" value="AAB90018.1"/>
    <property type="molecule type" value="Genomic_DNA"/>
</dbReference>
<dbReference type="PIR" id="D69404">
    <property type="entry name" value="D69404"/>
</dbReference>
<dbReference type="RefSeq" id="WP_010878732.1">
    <property type="nucleotide sequence ID" value="NC_000917.1"/>
</dbReference>
<dbReference type="STRING" id="224325.AF_1237"/>
<dbReference type="PaxDb" id="224325-AF_1237"/>
<dbReference type="EnsemblBacteria" id="AAB90018">
    <property type="protein sequence ID" value="AAB90018"/>
    <property type="gene ID" value="AF_1237"/>
</dbReference>
<dbReference type="GeneID" id="43496667"/>
<dbReference type="KEGG" id="afu:AF_1237"/>
<dbReference type="eggNOG" id="arCOG07524">
    <property type="taxonomic scope" value="Archaea"/>
</dbReference>
<dbReference type="HOGENOM" id="CLU_935687_0_0_2"/>
<dbReference type="OrthoDB" id="121253at2157"/>
<dbReference type="PhylomeDB" id="O29031"/>
<dbReference type="Proteomes" id="UP000002199">
    <property type="component" value="Chromosome"/>
</dbReference>
<dbReference type="GO" id="GO:0046872">
    <property type="term" value="F:metal ion binding"/>
    <property type="evidence" value="ECO:0007669"/>
    <property type="project" value="UniProtKB-KW"/>
</dbReference>
<dbReference type="GO" id="GO:0016491">
    <property type="term" value="F:oxidoreductase activity"/>
    <property type="evidence" value="ECO:0007669"/>
    <property type="project" value="TreeGrafter"/>
</dbReference>
<dbReference type="Gene3D" id="1.10.3820.10">
    <property type="entry name" value="Di-heme elbow motif domain"/>
    <property type="match status" value="1"/>
</dbReference>
<dbReference type="InterPro" id="IPR036280">
    <property type="entry name" value="Multihaem_cyt_sf"/>
</dbReference>
<dbReference type="InterPro" id="IPR051829">
    <property type="entry name" value="Multiheme_Cytochr_ET"/>
</dbReference>
<dbReference type="InterPro" id="IPR038266">
    <property type="entry name" value="NapC/NirT_cytc_sf"/>
</dbReference>
<dbReference type="PANTHER" id="PTHR35038:SF5">
    <property type="entry name" value="CYTOCHROME C-TYPE PROTEIN NRFB"/>
    <property type="match status" value="1"/>
</dbReference>
<dbReference type="PANTHER" id="PTHR35038">
    <property type="entry name" value="DISSIMILATORY SULFITE REDUCTASE SIRA"/>
    <property type="match status" value="1"/>
</dbReference>
<dbReference type="SUPFAM" id="SSF48695">
    <property type="entry name" value="Multiheme cytochromes"/>
    <property type="match status" value="1"/>
</dbReference>
<dbReference type="PROSITE" id="PS51008">
    <property type="entry name" value="MULTIHEME_CYTC"/>
    <property type="match status" value="1"/>
</dbReference>
<comment type="PTM">
    <text evidence="3">Binds 5 heme groups per subunit.</text>
</comment>
<reference key="1">
    <citation type="journal article" date="1997" name="Nature">
        <title>The complete genome sequence of the hyperthermophilic, sulphate-reducing archaeon Archaeoglobus fulgidus.</title>
        <authorList>
            <person name="Klenk H.-P."/>
            <person name="Clayton R.A."/>
            <person name="Tomb J.-F."/>
            <person name="White O."/>
            <person name="Nelson K.E."/>
            <person name="Ketchum K.A."/>
            <person name="Dodson R.J."/>
            <person name="Gwinn M.L."/>
            <person name="Hickey E.K."/>
            <person name="Peterson J.D."/>
            <person name="Richardson D.L."/>
            <person name="Kerlavage A.R."/>
            <person name="Graham D.E."/>
            <person name="Kyrpides N.C."/>
            <person name="Fleischmann R.D."/>
            <person name="Quackenbush J."/>
            <person name="Lee N.H."/>
            <person name="Sutton G.G."/>
            <person name="Gill S.R."/>
            <person name="Kirkness E.F."/>
            <person name="Dougherty B.A."/>
            <person name="McKenney K."/>
            <person name="Adams M.D."/>
            <person name="Loftus B.J."/>
            <person name="Peterson S.N."/>
            <person name="Reich C.I."/>
            <person name="McNeil L.K."/>
            <person name="Badger J.H."/>
            <person name="Glodek A."/>
            <person name="Zhou L."/>
            <person name="Overbeek R."/>
            <person name="Gocayne J.D."/>
            <person name="Weidman J.F."/>
            <person name="McDonald L.A."/>
            <person name="Utterback T.R."/>
            <person name="Cotton M.D."/>
            <person name="Spriggs T."/>
            <person name="Artiach P."/>
            <person name="Kaine B.P."/>
            <person name="Sykes S.M."/>
            <person name="Sadow P.W."/>
            <person name="D'Andrea K.P."/>
            <person name="Bowman C."/>
            <person name="Fujii C."/>
            <person name="Garland S.A."/>
            <person name="Mason T.M."/>
            <person name="Olsen G.J."/>
            <person name="Fraser C.M."/>
            <person name="Smith H.O."/>
            <person name="Woese C.R."/>
            <person name="Venter J.C."/>
        </authorList>
    </citation>
    <scope>NUCLEOTIDE SEQUENCE [LARGE SCALE GENOMIC DNA]</scope>
    <source>
        <strain>ATCC 49558 / DSM 4304 / JCM 9628 / NBRC 100126 / VC-16</strain>
    </source>
</reference>
<keyword id="KW-0249">Electron transport</keyword>
<keyword id="KW-0349">Heme</keyword>
<keyword id="KW-0408">Iron</keyword>
<keyword id="KW-0479">Metal-binding</keyword>
<keyword id="KW-1185">Reference proteome</keyword>
<keyword id="KW-0732">Signal</keyword>
<keyword id="KW-0813">Transport</keyword>
<sequence>MRAINKFLITVCIALLASVAVALGDGEETGEAEEFKVIDHSKVWEEKGITKYEGSKTCIQCHEDKVRQFFHSYHYQLFSENEGINGKTMIFGGKMAFNDYCMAMFVNNGTKVVNWIGYITLKKAPEGYEDLVGSFTGLTGCSMCHGVGMGLPPSPQESEEQLGNIDCLACHAKPDVYVSGVLGIKLGLKNVTKDDQGRWRYVINVPTEELAKSIINRPQSKNCLACHAFSGGGPHLKRPNIAPDLLNPELAAEFDVHFKAGLGCTDCHSGENHEFGTNSVDTWSREGEGAEVQQLPH</sequence>
<feature type="signal peptide" evidence="1">
    <location>
        <begin position="1"/>
        <end position="24"/>
    </location>
</feature>
<feature type="chain" id="PRO_0000006605" description="Uncharacterized protein AF_1237">
    <location>
        <begin position="25"/>
        <end position="297"/>
    </location>
</feature>
<feature type="region of interest" description="Disordered" evidence="2">
    <location>
        <begin position="277"/>
        <end position="297"/>
    </location>
</feature>
<feature type="binding site" description="covalent" evidence="1">
    <location>
        <position position="58"/>
    </location>
    <ligand>
        <name>heme</name>
        <dbReference type="ChEBI" id="CHEBI:30413"/>
        <label>1</label>
    </ligand>
</feature>
<feature type="binding site" description="covalent" evidence="1">
    <location>
        <position position="61"/>
    </location>
    <ligand>
        <name>heme</name>
        <dbReference type="ChEBI" id="CHEBI:30413"/>
        <label>1</label>
    </ligand>
</feature>
<feature type="binding site" description="axial binding residue" evidence="1">
    <location>
        <position position="62"/>
    </location>
    <ligand>
        <name>heme</name>
        <dbReference type="ChEBI" id="CHEBI:30413"/>
        <label>1</label>
    </ligand>
    <ligandPart>
        <name>Fe</name>
        <dbReference type="ChEBI" id="CHEBI:18248"/>
    </ligandPart>
</feature>
<feature type="binding site" description="covalent" evidence="1">
    <location>
        <position position="141"/>
    </location>
    <ligand>
        <name>heme</name>
        <dbReference type="ChEBI" id="CHEBI:30413"/>
        <label>2</label>
    </ligand>
</feature>
<feature type="binding site" description="covalent" evidence="1">
    <location>
        <position position="144"/>
    </location>
    <ligand>
        <name>heme</name>
        <dbReference type="ChEBI" id="CHEBI:30413"/>
        <label>2</label>
    </ligand>
</feature>
<feature type="binding site" description="axial binding residue" evidence="1">
    <location>
        <position position="145"/>
    </location>
    <ligand>
        <name>heme</name>
        <dbReference type="ChEBI" id="CHEBI:30413"/>
        <label>2</label>
    </ligand>
    <ligandPart>
        <name>Fe</name>
        <dbReference type="ChEBI" id="CHEBI:18248"/>
    </ligandPart>
</feature>
<feature type="binding site" description="covalent" evidence="1">
    <location>
        <position position="167"/>
    </location>
    <ligand>
        <name>heme</name>
        <dbReference type="ChEBI" id="CHEBI:30413"/>
        <label>3</label>
    </ligand>
</feature>
<feature type="binding site" description="covalent" evidence="1">
    <location>
        <position position="170"/>
    </location>
    <ligand>
        <name>heme</name>
        <dbReference type="ChEBI" id="CHEBI:30413"/>
        <label>3</label>
    </ligand>
</feature>
<feature type="binding site" description="axial binding residue" evidence="1">
    <location>
        <position position="171"/>
    </location>
    <ligand>
        <name>heme</name>
        <dbReference type="ChEBI" id="CHEBI:30413"/>
        <label>3</label>
    </ligand>
    <ligandPart>
        <name>Fe</name>
        <dbReference type="ChEBI" id="CHEBI:18248"/>
    </ligandPart>
</feature>
<feature type="binding site" description="covalent" evidence="1">
    <location>
        <position position="223"/>
    </location>
    <ligand>
        <name>heme</name>
        <dbReference type="ChEBI" id="CHEBI:30413"/>
        <label>4</label>
    </ligand>
</feature>
<feature type="binding site" description="covalent" evidence="1">
    <location>
        <position position="226"/>
    </location>
    <ligand>
        <name>heme</name>
        <dbReference type="ChEBI" id="CHEBI:30413"/>
        <label>4</label>
    </ligand>
</feature>
<feature type="binding site" description="axial binding residue" evidence="1">
    <location>
        <position position="227"/>
    </location>
    <ligand>
        <name>heme</name>
        <dbReference type="ChEBI" id="CHEBI:30413"/>
        <label>4</label>
    </ligand>
    <ligandPart>
        <name>Fe</name>
        <dbReference type="ChEBI" id="CHEBI:18248"/>
    </ligandPart>
</feature>
<feature type="binding site" description="covalent" evidence="1">
    <location>
        <position position="264"/>
    </location>
    <ligand>
        <name>heme</name>
        <dbReference type="ChEBI" id="CHEBI:30413"/>
        <label>5</label>
    </ligand>
</feature>
<feature type="binding site" description="covalent" evidence="1">
    <location>
        <position position="267"/>
    </location>
    <ligand>
        <name>heme</name>
        <dbReference type="ChEBI" id="CHEBI:30413"/>
        <label>5</label>
    </ligand>
</feature>
<feature type="binding site" description="axial binding residue" evidence="1">
    <location>
        <position position="268"/>
    </location>
    <ligand>
        <name>heme</name>
        <dbReference type="ChEBI" id="CHEBI:30413"/>
        <label>5</label>
    </ligand>
    <ligandPart>
        <name>Fe</name>
        <dbReference type="ChEBI" id="CHEBI:18248"/>
    </ligandPart>
</feature>
<organism>
    <name type="scientific">Archaeoglobus fulgidus (strain ATCC 49558 / DSM 4304 / JCM 9628 / NBRC 100126 / VC-16)</name>
    <dbReference type="NCBI Taxonomy" id="224325"/>
    <lineage>
        <taxon>Archaea</taxon>
        <taxon>Methanobacteriati</taxon>
        <taxon>Methanobacteriota</taxon>
        <taxon>Archaeoglobi</taxon>
        <taxon>Archaeoglobales</taxon>
        <taxon>Archaeoglobaceae</taxon>
        <taxon>Archaeoglobus</taxon>
    </lineage>
</organism>
<accession>O29031</accession>